<comment type="function">
    <text evidence="1 3">Participates in the regulation of synaptic vesicle docking and fusion through interaction with GTP-binding proteins (By similarity). Essential for neurotransmission and binds syntaxin, a component of the synaptic vesicle fusion machinery probably in a 1:1 ratio. Can interact with syntaxins 1, 2, and 3 but not syntaxin 4. Involved in the release of neurotransmitters from neurons through interacting with SNARE complex component STX1A and mediating the assembly of the SNARE complex at synaptic membranes (By similarity). May play a role in determining the specificity of intracellular fusion reactions.</text>
</comment>
<comment type="subunit">
    <text evidence="1 2 3 4 15">Interacts with SYTL4 (By similarity). Interacts with STX1A (PubMed:12730201). The interaction recruits SNARE complex components SNAP25 and VAMP2 and mediates neurotransmitter release from neurons (By similarity). Interacts with alpha-synuclein/SNCA; this interaction controls SNCA self-replicating aggregation (PubMed:27597756). Interacts with RAB3A; this interaction promotes RAB3A dissociation from the vesicle membrane (By similarity). Interacts with CABP5 (By similarity).</text>
</comment>
<comment type="interaction">
    <interactant intactId="EBI-960169">
        <id>P61764</id>
    </interactant>
    <interactant intactId="EBI-77613">
        <id>P05067</id>
        <label>APP</label>
    </interactant>
    <organismsDiffer>false</organismsDiffer>
    <experiments>7</experiments>
</comment>
<comment type="interaction">
    <interactant intactId="EBI-960169">
        <id>P61764</id>
    </interactant>
    <interactant intactId="EBI-741210">
        <id>Q0VDD7</id>
        <label>BRME1</label>
    </interactant>
    <organismsDiffer>false</organismsDiffer>
    <experiments>3</experiments>
</comment>
<comment type="interaction">
    <interactant intactId="EBI-960169">
        <id>P61764</id>
    </interactant>
    <interactant intactId="EBI-10250303">
        <id>Q6IPU0</id>
        <label>CENPP</label>
    </interactant>
    <organismsDiffer>false</organismsDiffer>
    <experiments>3</experiments>
</comment>
<comment type="interaction">
    <interactant intactId="EBI-960169">
        <id>P61764</id>
    </interactant>
    <interactant intactId="EBI-8592297">
        <id>P21917</id>
        <label>DRD4</label>
    </interactant>
    <organismsDiffer>false</organismsDiffer>
    <experiments>3</experiments>
</comment>
<comment type="interaction">
    <interactant intactId="EBI-960169">
        <id>P61764</id>
    </interactant>
    <interactant intactId="EBI-351896">
        <id>P11142</id>
        <label>HSPA8</label>
    </interactant>
    <organismsDiffer>false</organismsDiffer>
    <experiments>2</experiments>
</comment>
<comment type="interaction">
    <interactant intactId="EBI-960169">
        <id>P61764</id>
    </interactant>
    <interactant intactId="EBI-466029">
        <id>P42858</id>
        <label>HTT</label>
    </interactant>
    <organismsDiffer>false</organismsDiffer>
    <experiments>7</experiments>
</comment>
<comment type="interaction">
    <interactant intactId="EBI-960169">
        <id>P61764</id>
    </interactant>
    <interactant intactId="EBI-948266">
        <id>O14901</id>
        <label>KLF11</label>
    </interactant>
    <organismsDiffer>false</organismsDiffer>
    <experiments>3</experiments>
</comment>
<comment type="interaction">
    <interactant intactId="EBI-960169">
        <id>P61764</id>
    </interactant>
    <interactant intactId="EBI-959949">
        <id>P28482</id>
        <label>MAPK1</label>
    </interactant>
    <organismsDiffer>false</organismsDiffer>
    <experiments>3</experiments>
</comment>
<comment type="interaction">
    <interactant intactId="EBI-960169">
        <id>P61764</id>
    </interactant>
    <interactant intactId="EBI-748397">
        <id>P50222</id>
        <label>MEOX2</label>
    </interactant>
    <organismsDiffer>false</organismsDiffer>
    <experiments>3</experiments>
</comment>
<comment type="interaction">
    <interactant intactId="EBI-960169">
        <id>P61764</id>
    </interactant>
    <interactant intactId="EBI-347233">
        <id>O75376</id>
        <label>NCOR1</label>
    </interactant>
    <organismsDiffer>false</organismsDiffer>
    <experiments>3</experiments>
</comment>
<comment type="interaction">
    <interactant intactId="EBI-960169">
        <id>P61764</id>
    </interactant>
    <interactant intactId="EBI-2361917">
        <id>Q8N0Z3</id>
        <label>SPICE1</label>
    </interactant>
    <organismsDiffer>false</organismsDiffer>
    <experiments>3</experiments>
</comment>
<comment type="interaction">
    <interactant intactId="EBI-960169">
        <id>P61764</id>
    </interactant>
    <interactant intactId="EBI-714135">
        <id>O75558</id>
        <label>STX11</label>
    </interactant>
    <organismsDiffer>false</organismsDiffer>
    <experiments>8</experiments>
</comment>
<comment type="interaction">
    <interactant intactId="EBI-960169">
        <id>P61764</id>
    </interactant>
    <interactant intactId="EBI-8484990">
        <id>Q8N4C7</id>
        <label>STX19</label>
    </interactant>
    <organismsDiffer>false</organismsDiffer>
    <experiments>11</experiments>
</comment>
<comment type="interaction">
    <interactant intactId="EBI-960169">
        <id>P61764</id>
    </interactant>
    <interactant intactId="EBI-714206">
        <id>Q13190</id>
        <label>STX5</label>
    </interactant>
    <organismsDiffer>false</organismsDiffer>
    <experiments>6</experiments>
</comment>
<comment type="interaction">
    <interactant intactId="EBI-960169">
        <id>P61764</id>
    </interactant>
    <interactant intactId="EBI-747142">
        <id>Q96C24</id>
        <label>SYTL4</label>
    </interactant>
    <organismsDiffer>false</organismsDiffer>
    <experiments>3</experiments>
</comment>
<comment type="interaction">
    <interactant intactId="EBI-960169">
        <id>P61764</id>
    </interactant>
    <interactant intactId="EBI-2130415">
        <id>O00635</id>
        <label>TRIM38</label>
    </interactant>
    <organismsDiffer>false</organismsDiffer>
    <experiments>9</experiments>
</comment>
<comment type="subcellular location">
    <subcellularLocation>
        <location evidence="6">Cytoplasm</location>
        <location evidence="6">Cytosol</location>
    </subcellularLocation>
    <subcellularLocation>
        <location>Membrane</location>
        <topology>Peripheral membrane protein</topology>
    </subcellularLocation>
</comment>
<comment type="alternative products">
    <event type="alternative splicing"/>
    <isoform>
        <id>P61764-1</id>
        <id>Q64320-1</id>
        <name>1</name>
        <name>A</name>
        <sequence type="displayed"/>
    </isoform>
    <isoform>
        <id>P61764-2</id>
        <id>Q64320-2</id>
        <name>2</name>
        <name>BE</name>
        <name>HUNC18b</name>
        <sequence type="described" ref="VSP_006713"/>
    </isoform>
</comment>
<comment type="tissue specificity">
    <text>Brain and spinal cord. Highly enriched in axons.</text>
</comment>
<comment type="disease" evidence="5 6 7 8 9 10 11 12 13 14 16">
    <disease id="DI-00474">
        <name>Developmental and epileptic encephalopathy 4</name>
        <acronym>DEE4</acronym>
        <description>A severe form of epilepsy characterized by frequent tonic seizures or spasms beginning in infancy with a specific EEG finding of suppression-burst patterns, characterized by high-voltage bursts alternating with almost flat suppression phases. Affected individuals have neonatal or infantile onset of seizures, profound intellectual disability, and MRI evidence of brain hypomyelination.</description>
        <dbReference type="MIM" id="612164"/>
    </disease>
    <text>The disease is caused by variants affecting the gene represented in this entry.</text>
</comment>
<comment type="similarity">
    <text evidence="18">Belongs to the STXBP/unc-18/SEC1 family.</text>
</comment>
<protein>
    <recommendedName>
        <fullName>Syntaxin-binding protein 1</fullName>
    </recommendedName>
    <alternativeName>
        <fullName>MUNC18-1</fullName>
    </alternativeName>
    <alternativeName>
        <fullName>N-Sec1</fullName>
    </alternativeName>
    <alternativeName>
        <fullName>Protein unc-18 homolog 1</fullName>
        <shortName>Unc18-1</shortName>
    </alternativeName>
    <alternativeName>
        <fullName>Protein unc-18 homolog A</fullName>
        <shortName>Unc-18A</shortName>
    </alternativeName>
    <alternativeName>
        <fullName>p67</fullName>
    </alternativeName>
</protein>
<keyword id="KW-0002">3D-structure</keyword>
<keyword id="KW-0025">Alternative splicing</keyword>
<keyword id="KW-0963">Cytoplasm</keyword>
<keyword id="KW-0225">Disease variant</keyword>
<keyword id="KW-0887">Epilepsy</keyword>
<keyword id="KW-0991">Intellectual disability</keyword>
<keyword id="KW-0472">Membrane</keyword>
<keyword id="KW-0597">Phosphoprotein</keyword>
<keyword id="KW-0653">Protein transport</keyword>
<keyword id="KW-1267">Proteomics identification</keyword>
<keyword id="KW-1185">Reference proteome</keyword>
<keyword id="KW-0813">Transport</keyword>
<proteinExistence type="evidence at protein level"/>
<evidence type="ECO:0000250" key="1">
    <source>
        <dbReference type="UniProtKB" id="O08599"/>
    </source>
</evidence>
<evidence type="ECO:0000250" key="2">
    <source>
        <dbReference type="UniProtKB" id="P61763"/>
    </source>
</evidence>
<evidence type="ECO:0000250" key="3">
    <source>
        <dbReference type="UniProtKB" id="P61765"/>
    </source>
</evidence>
<evidence type="ECO:0000269" key="4">
    <source>
    </source>
</evidence>
<evidence type="ECO:0000269" key="5">
    <source>
    </source>
</evidence>
<evidence type="ECO:0000269" key="6">
    <source>
    </source>
</evidence>
<evidence type="ECO:0000269" key="7">
    <source>
    </source>
</evidence>
<evidence type="ECO:0000269" key="8">
    <source>
    </source>
</evidence>
<evidence type="ECO:0000269" key="9">
    <source>
    </source>
</evidence>
<evidence type="ECO:0000269" key="10">
    <source>
    </source>
</evidence>
<evidence type="ECO:0000269" key="11">
    <source>
    </source>
</evidence>
<evidence type="ECO:0000269" key="12">
    <source>
    </source>
</evidence>
<evidence type="ECO:0000269" key="13">
    <source>
    </source>
</evidence>
<evidence type="ECO:0000269" key="14">
    <source>
    </source>
</evidence>
<evidence type="ECO:0000269" key="15">
    <source>
    </source>
</evidence>
<evidence type="ECO:0000269" key="16">
    <source>
    </source>
</evidence>
<evidence type="ECO:0000303" key="17">
    <source>
    </source>
</evidence>
<evidence type="ECO:0000305" key="18"/>
<evidence type="ECO:0000312" key="19">
    <source>
        <dbReference type="EMBL" id="CAA73255.1"/>
    </source>
</evidence>
<feature type="chain" id="PRO_0000206277" description="Syntaxin-binding protein 1">
    <location>
        <begin position="1"/>
        <end position="594"/>
    </location>
</feature>
<feature type="modified residue" description="Phosphoserine" evidence="3">
    <location>
        <position position="476"/>
    </location>
</feature>
<feature type="modified residue" description="Phosphoserine" evidence="1">
    <location>
        <position position="509"/>
    </location>
</feature>
<feature type="modified residue" description="Phosphoserine" evidence="1">
    <location>
        <position position="511"/>
    </location>
</feature>
<feature type="modified residue" description="Phosphoserine" evidence="1">
    <location>
        <position position="516"/>
    </location>
</feature>
<feature type="modified residue" description="Phosphoserine" evidence="3">
    <location>
        <position position="593"/>
    </location>
</feature>
<feature type="splice variant" id="VSP_006713" description="In isoform 2." evidence="17">
    <original>QKLLDTLKKLNKTDEEISS</original>
    <variation>TKFLMDLRHPDFRESSRVSFEDQAPTME</variation>
    <location>
        <begin position="576"/>
        <end position="594"/>
    </location>
</feature>
<feature type="sequence variant" id="VAR_078631" description="In DEE4." evidence="9">
    <original>S</original>
    <variation>F</variation>
    <location>
        <position position="42"/>
    </location>
</feature>
<feature type="sequence variant" id="VAR_078632" description="Found in a patient with epileptic encephalopathy; likely pathogenic; dbSNP:rs1840867221." evidence="9">
    <original>S</original>
    <variation>P</variation>
    <location>
        <position position="80"/>
    </location>
</feature>
<feature type="sequence variant" id="VAR_046205" description="In DEE4; may alter protein structure; dbSNP:rs121918320." evidence="5">
    <original>V</original>
    <variation>D</variation>
    <location>
        <position position="84"/>
    </location>
</feature>
<feature type="sequence variant" id="VAR_073148" description="No effect on subcellular location; dbSNP:rs34830702." evidence="6">
    <original>V</original>
    <variation>I</variation>
    <location>
        <position position="84"/>
    </location>
</feature>
<feature type="sequence variant" id="VAR_078757" description="In DEE4." evidence="13">
    <location>
        <begin position="122"/>
        <end position="594"/>
    </location>
</feature>
<feature type="sequence variant" id="VAR_046206" description="In DEE4; reduced thermostability; decreased binding to STX1A; dbSNP:rs121918318." evidence="5">
    <original>C</original>
    <variation>Y</variation>
    <location>
        <position position="180"/>
    </location>
</feature>
<feature type="sequence variant" id="VAR_073149" description="In DEE4." evidence="7">
    <original>L</original>
    <variation>R</variation>
    <location>
        <position position="183"/>
    </location>
</feature>
<feature type="sequence variant" id="VAR_078633" description="In DEE4; dbSNP:rs796053355." evidence="9">
    <original>R</original>
    <variation>W</variation>
    <location>
        <position position="190"/>
    </location>
</feature>
<feature type="sequence variant" id="VAR_073150" description="In DEE4." evidence="10">
    <original>A</original>
    <variation>T</variation>
    <location>
        <position position="251"/>
    </location>
</feature>
<feature type="sequence variant" id="VAR_078758" description="In DEE4; dbSNP:rs2131481488." evidence="14">
    <original>L</original>
    <variation>P</variation>
    <location>
        <position position="281"/>
    </location>
</feature>
<feature type="sequence variant" id="VAR_071814" description="In DEE4; dbSNP:rs587777310." evidence="11">
    <original>E</original>
    <variation>K</variation>
    <location>
        <position position="283"/>
    </location>
</feature>
<feature type="sequence variant" id="VAR_071815" description="In DEE4." evidence="11">
    <original>D</original>
    <variation>Y</variation>
    <location>
        <position position="285"/>
    </location>
</feature>
<feature type="sequence variant" id="VAR_078759" description="In DEE4; dbSNP:rs796053361." evidence="14">
    <original>R</original>
    <variation>H</variation>
    <location>
        <position position="292"/>
    </location>
</feature>
<feature type="sequence variant" id="VAR_078634" description="In DEE4; dbSNP:rs886041337." evidence="9">
    <original>C</original>
    <variation>R</variation>
    <location>
        <position position="354"/>
    </location>
</feature>
<feature type="sequence variant" id="VAR_078218" description="In DEE4; dbSNP:rs796053367." evidence="16">
    <original>R</original>
    <variation>C</variation>
    <location>
        <position position="406"/>
    </location>
</feature>
<feature type="sequence variant" id="VAR_073151" description="In DEE4; dbSNP:rs886041246." evidence="6 12">
    <original>R</original>
    <variation>H</variation>
    <location>
        <position position="406"/>
    </location>
</feature>
<feature type="sequence variant" id="VAR_073152" description="Expressed at low levels compared with wild-type; no effect on subcellular location." evidence="6">
    <original>Q</original>
    <variation>L</variation>
    <location>
        <position position="431"/>
    </location>
</feature>
<feature type="sequence variant" id="VAR_046207" description="In DEE4; may alter protein structure; dbSNP:rs121918319." evidence="5">
    <original>M</original>
    <variation>R</variation>
    <location>
        <position position="443"/>
    </location>
</feature>
<feature type="sequence variant" id="VAR_071816" description="In DEE4." evidence="11">
    <original>H</original>
    <variation>P</variation>
    <location>
        <position position="445"/>
    </location>
</feature>
<feature type="sequence variant" id="VAR_073153" description="In DEE4; dbSNP:rs796053368." evidence="7">
    <original>P</original>
    <variation>L</variation>
    <location>
        <position position="480"/>
    </location>
</feature>
<feature type="sequence variant" id="VAR_078635" description="Found in a patient with Lennox-Gastaut syndrome; uncertain significance; dbSNP:rs1842044505." evidence="9">
    <original>G</original>
    <variation>C</variation>
    <location>
        <position position="544"/>
    </location>
</feature>
<feature type="sequence variant" id="VAR_046208" description="In DEE4; may alter protein structure; dbSNP:rs121918317." evidence="5">
    <original>G</original>
    <variation>D</variation>
    <location>
        <position position="544"/>
    </location>
</feature>
<feature type="sequence variant" id="VAR_078636" description="Found in a patient with epileptic encephalopathy; likely pathogenic." evidence="9">
    <original>T</original>
    <variation>A</variation>
    <location>
        <position position="570"/>
    </location>
</feature>
<feature type="sequence variant" id="VAR_073154" description="In DEE4." evidence="7">
    <original>T</original>
    <variation>P</variation>
    <location>
        <position position="574"/>
    </location>
</feature>
<gene>
    <name type="primary">STXBP1</name>
    <name type="synonym">UNC18A</name>
</gene>
<organism>
    <name type="scientific">Homo sapiens</name>
    <name type="common">Human</name>
    <dbReference type="NCBI Taxonomy" id="9606"/>
    <lineage>
        <taxon>Eukaryota</taxon>
        <taxon>Metazoa</taxon>
        <taxon>Chordata</taxon>
        <taxon>Craniata</taxon>
        <taxon>Vertebrata</taxon>
        <taxon>Euteleostomi</taxon>
        <taxon>Mammalia</taxon>
        <taxon>Eutheria</taxon>
        <taxon>Euarchontoglires</taxon>
        <taxon>Primates</taxon>
        <taxon>Haplorrhini</taxon>
        <taxon>Catarrhini</taxon>
        <taxon>Hominidae</taxon>
        <taxon>Homo</taxon>
    </lineage>
</organism>
<dbReference type="EMBL" id="D63851">
    <property type="protein sequence ID" value="BAA19483.1"/>
    <property type="molecule type" value="mRNA"/>
</dbReference>
<dbReference type="EMBL" id="AF004562">
    <property type="protein sequence ID" value="AAC39688.1"/>
    <property type="molecule type" value="mRNA"/>
</dbReference>
<dbReference type="EMBL" id="AF004563">
    <property type="protein sequence ID" value="AAC39689.1"/>
    <property type="molecule type" value="mRNA"/>
</dbReference>
<dbReference type="EMBL" id="Y12723">
    <property type="protein sequence ID" value="CAA73255.1"/>
    <property type="molecule type" value="mRNA"/>
</dbReference>
<dbReference type="EMBL" id="AL162426">
    <property type="status" value="NOT_ANNOTATED_CDS"/>
    <property type="molecule type" value="Genomic_DNA"/>
</dbReference>
<dbReference type="EMBL" id="CH471090">
    <property type="protein sequence ID" value="EAW87679.1"/>
    <property type="molecule type" value="Genomic_DNA"/>
</dbReference>
<dbReference type="EMBL" id="CH471090">
    <property type="protein sequence ID" value="EAW87681.1"/>
    <property type="molecule type" value="Genomic_DNA"/>
</dbReference>
<dbReference type="EMBL" id="BC015749">
    <property type="protein sequence ID" value="AAH15749.1"/>
    <property type="molecule type" value="mRNA"/>
</dbReference>
<dbReference type="CCDS" id="CCDS35146.1"/>
<dbReference type="CCDS" id="CCDS6874.1">
    <molecule id="P61764-2"/>
</dbReference>
<dbReference type="RefSeq" id="NP_001027392.1">
    <molecule id="P61764-1"/>
    <property type="nucleotide sequence ID" value="NM_001032221.6"/>
</dbReference>
<dbReference type="RefSeq" id="NP_003156.1">
    <molecule id="P61764-2"/>
    <property type="nucleotide sequence ID" value="NM_003165.6"/>
</dbReference>
<dbReference type="PDB" id="6L03">
    <property type="method" value="X-ray"/>
    <property type="resolution" value="2.08 A"/>
    <property type="chains" value="F=141-149"/>
</dbReference>
<dbReference type="PDBsum" id="6L03"/>
<dbReference type="SMR" id="P61764"/>
<dbReference type="BioGRID" id="112681">
    <property type="interactions" value="127"/>
</dbReference>
<dbReference type="CORUM" id="P61764"/>
<dbReference type="FunCoup" id="P61764">
    <property type="interactions" value="2554"/>
</dbReference>
<dbReference type="IntAct" id="P61764">
    <property type="interactions" value="104"/>
</dbReference>
<dbReference type="MINT" id="P61764"/>
<dbReference type="STRING" id="9606.ENSP00000362399"/>
<dbReference type="TCDB" id="1.F.1.1.3">
    <property type="family name" value="the synaptosomal vesicle fusion pore (svf-pore) family"/>
</dbReference>
<dbReference type="GlyGen" id="P61764">
    <property type="glycosylation" value="1 site, 1 O-linked glycan (1 site)"/>
</dbReference>
<dbReference type="iPTMnet" id="P61764"/>
<dbReference type="MetOSite" id="P61764"/>
<dbReference type="PhosphoSitePlus" id="P61764"/>
<dbReference type="SwissPalm" id="P61764"/>
<dbReference type="BioMuta" id="STXBP1"/>
<dbReference type="DMDM" id="50403646"/>
<dbReference type="jPOST" id="P61764"/>
<dbReference type="MassIVE" id="P61764"/>
<dbReference type="PaxDb" id="9606-ENSP00000362399"/>
<dbReference type="PeptideAtlas" id="P61764"/>
<dbReference type="ProteomicsDB" id="57331"/>
<dbReference type="ProteomicsDB" id="57332">
    <molecule id="P61764-2"/>
</dbReference>
<dbReference type="Pumba" id="P61764"/>
<dbReference type="Antibodypedia" id="2191">
    <property type="antibodies" value="517 antibodies from 40 providers"/>
</dbReference>
<dbReference type="DNASU" id="6812"/>
<dbReference type="YCharOS" id="P61764">
    <property type="antibodies" value="Tested 12 antibodies from 8 manufacturers"/>
</dbReference>
<dbReference type="Ensembl" id="ENST00000373299.5">
    <molecule id="P61764-1"/>
    <property type="protein sequence ID" value="ENSP00000362396.2"/>
    <property type="gene ID" value="ENSG00000136854.26"/>
</dbReference>
<dbReference type="Ensembl" id="ENST00000373302.8">
    <molecule id="P61764-2"/>
    <property type="protein sequence ID" value="ENSP00000362399.3"/>
    <property type="gene ID" value="ENSG00000136854.26"/>
</dbReference>
<dbReference type="Ensembl" id="ENST00000494254.4">
    <molecule id="P61764-2"/>
    <property type="protein sequence ID" value="ENSP00000485397.2"/>
    <property type="gene ID" value="ENSG00000136854.26"/>
</dbReference>
<dbReference type="GeneID" id="6812"/>
<dbReference type="KEGG" id="hsa:6812"/>
<dbReference type="MANE-Select" id="ENST00000373299.5">
    <property type="protein sequence ID" value="ENSP00000362396.2"/>
    <property type="RefSeq nucleotide sequence ID" value="NM_001032221.6"/>
    <property type="RefSeq protein sequence ID" value="NP_001027392.1"/>
</dbReference>
<dbReference type="UCSC" id="uc004brk.2">
    <property type="organism name" value="human"/>
</dbReference>
<dbReference type="UCSC" id="uc004brl.3">
    <property type="organism name" value="human"/>
</dbReference>
<dbReference type="AGR" id="HGNC:11444"/>
<dbReference type="CTD" id="6812"/>
<dbReference type="DisGeNET" id="6812"/>
<dbReference type="GeneCards" id="STXBP1"/>
<dbReference type="GeneReviews" id="STXBP1"/>
<dbReference type="HGNC" id="HGNC:11444">
    <property type="gene designation" value="STXBP1"/>
</dbReference>
<dbReference type="HPA" id="ENSG00000136854">
    <property type="expression patterns" value="Tissue enhanced (brain, retina)"/>
</dbReference>
<dbReference type="MalaCards" id="STXBP1"/>
<dbReference type="MIM" id="602926">
    <property type="type" value="gene"/>
</dbReference>
<dbReference type="MIM" id="612164">
    <property type="type" value="phenotype"/>
</dbReference>
<dbReference type="neXtProt" id="NX_P61764"/>
<dbReference type="OpenTargets" id="ENSG00000136854"/>
<dbReference type="Orphanet" id="495818">
    <property type="disease" value="9q33.3q34.11 microdeletion syndrome"/>
</dbReference>
<dbReference type="Orphanet" id="599373">
    <property type="disease" value="STXBP1-related encephalopathy"/>
</dbReference>
<dbReference type="PharmGKB" id="PA36241"/>
<dbReference type="VEuPathDB" id="HostDB:ENSG00000136854"/>
<dbReference type="eggNOG" id="KOG1300">
    <property type="taxonomic scope" value="Eukaryota"/>
</dbReference>
<dbReference type="GeneTree" id="ENSGT00940000155127"/>
<dbReference type="HOGENOM" id="CLU_009210_2_0_1"/>
<dbReference type="InParanoid" id="P61764"/>
<dbReference type="OMA" id="PFTRPHT"/>
<dbReference type="OrthoDB" id="2228at2759"/>
<dbReference type="PAN-GO" id="P61764">
    <property type="GO annotations" value="7 GO annotations based on evolutionary models"/>
</dbReference>
<dbReference type="PhylomeDB" id="P61764"/>
<dbReference type="TreeFam" id="TF313242"/>
<dbReference type="PathwayCommons" id="P61764"/>
<dbReference type="Reactome" id="R-HSA-181429">
    <molecule id="P61764-1"/>
    <property type="pathway name" value="Serotonin Neurotransmitter Release Cycle"/>
</dbReference>
<dbReference type="Reactome" id="R-HSA-181430">
    <molecule id="P61764-1"/>
    <property type="pathway name" value="Norepinephrine Neurotransmitter Release Cycle"/>
</dbReference>
<dbReference type="Reactome" id="R-HSA-210500">
    <molecule id="P61764-1"/>
    <property type="pathway name" value="Glutamate Neurotransmitter Release Cycle"/>
</dbReference>
<dbReference type="Reactome" id="R-HSA-212676">
    <molecule id="P61764-1"/>
    <property type="pathway name" value="Dopamine Neurotransmitter Release Cycle"/>
</dbReference>
<dbReference type="Reactome" id="R-HSA-264642">
    <molecule id="P61764-1"/>
    <property type="pathway name" value="Acetylcholine Neurotransmitter Release Cycle"/>
</dbReference>
<dbReference type="Reactome" id="R-HSA-422356">
    <property type="pathway name" value="Regulation of insulin secretion"/>
</dbReference>
<dbReference type="Reactome" id="R-HSA-6794361">
    <property type="pathway name" value="Neurexins and neuroligins"/>
</dbReference>
<dbReference type="Reactome" id="R-HSA-888590">
    <molecule id="P61764-1"/>
    <property type="pathway name" value="GABA synthesis, release, reuptake and degradation"/>
</dbReference>
<dbReference type="SignaLink" id="P61764"/>
<dbReference type="SIGNOR" id="P61764"/>
<dbReference type="BioGRID-ORCS" id="6812">
    <property type="hits" value="49 hits in 1155 CRISPR screens"/>
</dbReference>
<dbReference type="CD-CODE" id="91857CE7">
    <property type="entry name" value="Nucleolus"/>
</dbReference>
<dbReference type="CD-CODE" id="FB4E32DD">
    <property type="entry name" value="Presynaptic clusters and postsynaptic densities"/>
</dbReference>
<dbReference type="ChiTaRS" id="STXBP1">
    <property type="organism name" value="human"/>
</dbReference>
<dbReference type="GeneWiki" id="STXBP1"/>
<dbReference type="GenomeRNAi" id="6812"/>
<dbReference type="Pharos" id="P61764">
    <property type="development level" value="Tbio"/>
</dbReference>
<dbReference type="PRO" id="PR:P61764"/>
<dbReference type="Proteomes" id="UP000005640">
    <property type="component" value="Chromosome 9"/>
</dbReference>
<dbReference type="RNAct" id="P61764">
    <property type="molecule type" value="protein"/>
</dbReference>
<dbReference type="Bgee" id="ENSG00000136854">
    <property type="expression patterns" value="Expressed in middle temporal gyrus and 196 other cell types or tissues"/>
</dbReference>
<dbReference type="ExpressionAtlas" id="P61764">
    <property type="expression patterns" value="baseline and differential"/>
</dbReference>
<dbReference type="GO" id="GO:0030424">
    <property type="term" value="C:axon"/>
    <property type="evidence" value="ECO:0007669"/>
    <property type="project" value="Ensembl"/>
</dbReference>
<dbReference type="GO" id="GO:0005737">
    <property type="term" value="C:cytoplasm"/>
    <property type="evidence" value="ECO:0000250"/>
    <property type="project" value="UniProtKB"/>
</dbReference>
<dbReference type="GO" id="GO:0005829">
    <property type="term" value="C:cytosol"/>
    <property type="evidence" value="ECO:0000314"/>
    <property type="project" value="HPA"/>
</dbReference>
<dbReference type="GO" id="GO:0070062">
    <property type="term" value="C:extracellular exosome"/>
    <property type="evidence" value="ECO:0007005"/>
    <property type="project" value="UniProtKB"/>
</dbReference>
<dbReference type="GO" id="GO:0098888">
    <property type="term" value="C:extrinsic component of presynaptic membrane"/>
    <property type="evidence" value="ECO:0007669"/>
    <property type="project" value="Ensembl"/>
</dbReference>
<dbReference type="GO" id="GO:0098978">
    <property type="term" value="C:glutamatergic synapse"/>
    <property type="evidence" value="ECO:0007669"/>
    <property type="project" value="Ensembl"/>
</dbReference>
<dbReference type="GO" id="GO:0005739">
    <property type="term" value="C:mitochondrion"/>
    <property type="evidence" value="ECO:0000250"/>
    <property type="project" value="UniProtKB"/>
</dbReference>
<dbReference type="GO" id="GO:0005654">
    <property type="term" value="C:nucleoplasm"/>
    <property type="evidence" value="ECO:0000314"/>
    <property type="project" value="HPA"/>
</dbReference>
<dbReference type="GO" id="GO:0098688">
    <property type="term" value="C:parallel fiber to Purkinje cell synapse"/>
    <property type="evidence" value="ECO:0007669"/>
    <property type="project" value="Ensembl"/>
</dbReference>
<dbReference type="GO" id="GO:0048471">
    <property type="term" value="C:perinuclear region of cytoplasm"/>
    <property type="evidence" value="ECO:0007669"/>
    <property type="project" value="Ensembl"/>
</dbReference>
<dbReference type="GO" id="GO:0045335">
    <property type="term" value="C:phagocytic vesicle"/>
    <property type="evidence" value="ECO:0007669"/>
    <property type="project" value="Ensembl"/>
</dbReference>
<dbReference type="GO" id="GO:0005886">
    <property type="term" value="C:plasma membrane"/>
    <property type="evidence" value="ECO:0000314"/>
    <property type="project" value="UniProtKB"/>
</dbReference>
<dbReference type="GO" id="GO:0031091">
    <property type="term" value="C:platelet alpha granule"/>
    <property type="evidence" value="ECO:0000314"/>
    <property type="project" value="UniProtKB"/>
</dbReference>
<dbReference type="GO" id="GO:0098794">
    <property type="term" value="C:postsynapse"/>
    <property type="evidence" value="ECO:0007669"/>
    <property type="project" value="Ensembl"/>
</dbReference>
<dbReference type="GO" id="GO:0098831">
    <property type="term" value="C:presynaptic active zone cytoplasmic component"/>
    <property type="evidence" value="ECO:0007669"/>
    <property type="project" value="Ensembl"/>
</dbReference>
<dbReference type="GO" id="GO:0099523">
    <property type="term" value="C:presynaptic cytosol"/>
    <property type="evidence" value="ECO:0007669"/>
    <property type="project" value="Ensembl"/>
</dbReference>
<dbReference type="GO" id="GO:0032991">
    <property type="term" value="C:protein-containing complex"/>
    <property type="evidence" value="ECO:0000250"/>
    <property type="project" value="UniProtKB"/>
</dbReference>
<dbReference type="GO" id="GO:0030141">
    <property type="term" value="C:secretory granule"/>
    <property type="evidence" value="ECO:0000318"/>
    <property type="project" value="GO_Central"/>
</dbReference>
<dbReference type="GO" id="GO:0042802">
    <property type="term" value="F:identical protein binding"/>
    <property type="evidence" value="ECO:0000250"/>
    <property type="project" value="UniProtKB"/>
</dbReference>
<dbReference type="GO" id="GO:0043274">
    <property type="term" value="F:phospholipase binding"/>
    <property type="evidence" value="ECO:0007669"/>
    <property type="project" value="Ensembl"/>
</dbReference>
<dbReference type="GO" id="GO:0019904">
    <property type="term" value="F:protein domain specific binding"/>
    <property type="evidence" value="ECO:0007669"/>
    <property type="project" value="Ensembl"/>
</dbReference>
<dbReference type="GO" id="GO:0019901">
    <property type="term" value="F:protein kinase binding"/>
    <property type="evidence" value="ECO:0007669"/>
    <property type="project" value="Ensembl"/>
</dbReference>
<dbReference type="GO" id="GO:0003723">
    <property type="term" value="F:RNA binding"/>
    <property type="evidence" value="ECO:0007005"/>
    <property type="project" value="UniProtKB"/>
</dbReference>
<dbReference type="GO" id="GO:0000149">
    <property type="term" value="F:SNARE binding"/>
    <property type="evidence" value="ECO:0000250"/>
    <property type="project" value="UniProtKB"/>
</dbReference>
<dbReference type="GO" id="GO:0019905">
    <property type="term" value="F:syntaxin binding"/>
    <property type="evidence" value="ECO:0000353"/>
    <property type="project" value="UniProtKB"/>
</dbReference>
<dbReference type="GO" id="GO:0017075">
    <property type="term" value="F:syntaxin-1 binding"/>
    <property type="evidence" value="ECO:0000353"/>
    <property type="project" value="UniProtKB"/>
</dbReference>
<dbReference type="GO" id="GO:0007412">
    <property type="term" value="P:axon target recognition"/>
    <property type="evidence" value="ECO:0000250"/>
    <property type="project" value="UniProtKB"/>
</dbReference>
<dbReference type="GO" id="GO:0071346">
    <property type="term" value="P:cellular response to type II interferon"/>
    <property type="evidence" value="ECO:0007669"/>
    <property type="project" value="Ensembl"/>
</dbReference>
<dbReference type="GO" id="GO:0003006">
    <property type="term" value="P:developmental process involved in reproduction"/>
    <property type="evidence" value="ECO:0007669"/>
    <property type="project" value="Ensembl"/>
</dbReference>
<dbReference type="GO" id="GO:0006886">
    <property type="term" value="P:intracellular protein transport"/>
    <property type="evidence" value="ECO:0000318"/>
    <property type="project" value="GO_Central"/>
</dbReference>
<dbReference type="GO" id="GO:0060292">
    <property type="term" value="P:long-term synaptic depression"/>
    <property type="evidence" value="ECO:0007669"/>
    <property type="project" value="Ensembl"/>
</dbReference>
<dbReference type="GO" id="GO:0043524">
    <property type="term" value="P:negative regulation of neuron apoptotic process"/>
    <property type="evidence" value="ECO:0007669"/>
    <property type="project" value="Ensembl"/>
</dbReference>
<dbReference type="GO" id="GO:0031333">
    <property type="term" value="P:negative regulation of protein-containing complex assembly"/>
    <property type="evidence" value="ECO:0007669"/>
    <property type="project" value="Ensembl"/>
</dbReference>
<dbReference type="GO" id="GO:0032229">
    <property type="term" value="P:negative regulation of synaptic transmission, GABAergic"/>
    <property type="evidence" value="ECO:0000250"/>
    <property type="project" value="UniProtKB"/>
</dbReference>
<dbReference type="GO" id="GO:0007274">
    <property type="term" value="P:neuromuscular synaptic transmission"/>
    <property type="evidence" value="ECO:0007669"/>
    <property type="project" value="Ensembl"/>
</dbReference>
<dbReference type="GO" id="GO:0051402">
    <property type="term" value="P:neuron apoptotic process"/>
    <property type="evidence" value="ECO:0007669"/>
    <property type="project" value="Ensembl"/>
</dbReference>
<dbReference type="GO" id="GO:0070527">
    <property type="term" value="P:platelet aggregation"/>
    <property type="evidence" value="ECO:0000315"/>
    <property type="project" value="UniProtKB"/>
</dbReference>
<dbReference type="GO" id="GO:0002576">
    <property type="term" value="P:platelet degranulation"/>
    <property type="evidence" value="ECO:0000315"/>
    <property type="project" value="UniProtKB"/>
</dbReference>
<dbReference type="GO" id="GO:0045956">
    <property type="term" value="P:positive regulation of calcium ion-dependent exocytosis"/>
    <property type="evidence" value="ECO:0007669"/>
    <property type="project" value="Ensembl"/>
</dbReference>
<dbReference type="GO" id="GO:1903296">
    <property type="term" value="P:positive regulation of glutamate secretion, neurotransmission"/>
    <property type="evidence" value="ECO:0007669"/>
    <property type="project" value="Ensembl"/>
</dbReference>
<dbReference type="GO" id="GO:0043306">
    <property type="term" value="P:positive regulation of mast cell degranulation"/>
    <property type="evidence" value="ECO:0007669"/>
    <property type="project" value="Ensembl"/>
</dbReference>
<dbReference type="GO" id="GO:0106022">
    <property type="term" value="P:positive regulation of vesicle docking"/>
    <property type="evidence" value="ECO:0007669"/>
    <property type="project" value="Ensembl"/>
</dbReference>
<dbReference type="GO" id="GO:0099525">
    <property type="term" value="P:presynaptic dense core vesicle exocytosis"/>
    <property type="evidence" value="ECO:0000318"/>
    <property type="project" value="GO_Central"/>
</dbReference>
<dbReference type="GO" id="GO:0072659">
    <property type="term" value="P:protein localization to plasma membrane"/>
    <property type="evidence" value="ECO:0000314"/>
    <property type="project" value="UniProtKB"/>
</dbReference>
<dbReference type="GO" id="GO:0050821">
    <property type="term" value="P:protein stabilization"/>
    <property type="evidence" value="ECO:0007669"/>
    <property type="project" value="Ensembl"/>
</dbReference>
<dbReference type="GO" id="GO:2000367">
    <property type="term" value="P:regulation of acrosomal vesicle exocytosis"/>
    <property type="evidence" value="ECO:0000315"/>
    <property type="project" value="UniProtKB"/>
</dbReference>
<dbReference type="GO" id="GO:0035542">
    <property type="term" value="P:regulation of SNARE complex assembly"/>
    <property type="evidence" value="ECO:0000304"/>
    <property type="project" value="ParkinsonsUK-UCL"/>
</dbReference>
<dbReference type="GO" id="GO:0031630">
    <property type="term" value="P:regulation of synaptic vesicle fusion to presynaptic active zone membrane"/>
    <property type="evidence" value="ECO:0000304"/>
    <property type="project" value="ParkinsonsUK-UCL"/>
</dbReference>
<dbReference type="GO" id="GO:0010807">
    <property type="term" value="P:regulation of synaptic vesicle priming"/>
    <property type="evidence" value="ECO:0000250"/>
    <property type="project" value="UniProtKB"/>
</dbReference>
<dbReference type="GO" id="GO:0032355">
    <property type="term" value="P:response to estradiol"/>
    <property type="evidence" value="ECO:0007669"/>
    <property type="project" value="Ensembl"/>
</dbReference>
<dbReference type="GO" id="GO:0035493">
    <property type="term" value="P:SNARE complex assembly"/>
    <property type="evidence" value="ECO:0000315"/>
    <property type="project" value="UniProtKB"/>
</dbReference>
<dbReference type="GO" id="GO:0016188">
    <property type="term" value="P:synaptic vesicle maturation"/>
    <property type="evidence" value="ECO:0000250"/>
    <property type="project" value="UniProtKB"/>
</dbReference>
<dbReference type="GO" id="GO:0016082">
    <property type="term" value="P:synaptic vesicle priming"/>
    <property type="evidence" value="ECO:0007669"/>
    <property type="project" value="Ensembl"/>
</dbReference>
<dbReference type="GO" id="GO:0006904">
    <property type="term" value="P:vesicle docking involved in exocytosis"/>
    <property type="evidence" value="ECO:0000250"/>
    <property type="project" value="ParkinsonsUK-UCL"/>
</dbReference>
<dbReference type="FunFam" id="1.25.40.60:FF:000001">
    <property type="entry name" value="syntaxin-binding protein 1 isoform X2"/>
    <property type="match status" value="1"/>
</dbReference>
<dbReference type="FunFam" id="3.40.50.2060:FF:000001">
    <property type="entry name" value="syntaxin-binding protein 1 isoform X2"/>
    <property type="match status" value="1"/>
</dbReference>
<dbReference type="FunFam" id="3.90.830.10:FF:000001">
    <property type="entry name" value="syntaxin-binding protein 1 isoform X2"/>
    <property type="match status" value="1"/>
</dbReference>
<dbReference type="Gene3D" id="1.25.40.60">
    <property type="match status" value="1"/>
</dbReference>
<dbReference type="Gene3D" id="3.40.50.1910">
    <property type="match status" value="1"/>
</dbReference>
<dbReference type="Gene3D" id="3.40.50.2060">
    <property type="match status" value="1"/>
</dbReference>
<dbReference type="Gene3D" id="3.90.830.10">
    <property type="entry name" value="Syntaxin Binding Protein 1, Chain A, domain 2"/>
    <property type="match status" value="1"/>
</dbReference>
<dbReference type="InterPro" id="IPR043154">
    <property type="entry name" value="Sec-1-like_dom1"/>
</dbReference>
<dbReference type="InterPro" id="IPR043127">
    <property type="entry name" value="Sec-1-like_dom3a"/>
</dbReference>
<dbReference type="InterPro" id="IPR001619">
    <property type="entry name" value="Sec1-like"/>
</dbReference>
<dbReference type="InterPro" id="IPR027482">
    <property type="entry name" value="Sec1-like_dom2"/>
</dbReference>
<dbReference type="InterPro" id="IPR036045">
    <property type="entry name" value="Sec1-like_sf"/>
</dbReference>
<dbReference type="PANTHER" id="PTHR11679">
    <property type="entry name" value="VESICLE PROTEIN SORTING-ASSOCIATED"/>
    <property type="match status" value="1"/>
</dbReference>
<dbReference type="Pfam" id="PF00995">
    <property type="entry name" value="Sec1"/>
    <property type="match status" value="1"/>
</dbReference>
<dbReference type="PIRSF" id="PIRSF005715">
    <property type="entry name" value="VPS45_Sec1"/>
    <property type="match status" value="1"/>
</dbReference>
<dbReference type="SUPFAM" id="SSF56815">
    <property type="entry name" value="Sec1/munc18-like (SM) proteins"/>
    <property type="match status" value="1"/>
</dbReference>
<accession>P61764</accession>
<accession>B1AM97</accession>
<accession>Q28208</accession>
<accession>Q62759</accession>
<accession>Q64320</accession>
<accession>Q68CM6</accession>
<accession>Q96TG8</accession>
<name>STXB1_HUMAN</name>
<reference key="1">
    <citation type="journal article" date="1996" name="J. Neurosci.">
        <title>A murine neural-specific homolog corrects cholinergic defects in Caenorhabditis elegans unc-18 mutants.</title>
        <authorList>
            <person name="Gengyo-Ando K."/>
            <person name="Kitayama H."/>
            <person name="Mukaida M."/>
            <person name="Ikawa Y."/>
        </authorList>
    </citation>
    <scope>NUCLEOTIDE SEQUENCE [MRNA] (ISOFORM 1)</scope>
    <source>
        <tissue>Fetal brain</tissue>
    </source>
</reference>
<reference key="2">
    <citation type="journal article" date="1998" name="Genomics">
        <title>Identification and characterization of the human ortholog of rat STXBP1, a protein implicated in vesicle trafficking and neurotransmitter release.</title>
        <authorList>
            <person name="Swanson D.A."/>
            <person name="Steel J.M."/>
            <person name="Valle D."/>
        </authorList>
    </citation>
    <scope>NUCLEOTIDE SEQUENCE [MRNA] (ISOFORMS 1 AND 2)</scope>
</reference>
<reference evidence="19" key="3">
    <citation type="submission" date="1997-04" db="EMBL/GenBank/DDBJ databases">
        <authorList>
            <person name="Franco B."/>
        </authorList>
    </citation>
    <scope>NUCLEOTIDE SEQUENCE [MRNA] (ISOFORM 1)</scope>
    <source>
        <tissue evidence="19">Brain</tissue>
    </source>
</reference>
<reference key="4">
    <citation type="journal article" date="2004" name="Nature">
        <title>DNA sequence and analysis of human chromosome 9.</title>
        <authorList>
            <person name="Humphray S.J."/>
            <person name="Oliver K."/>
            <person name="Hunt A.R."/>
            <person name="Plumb R.W."/>
            <person name="Loveland J.E."/>
            <person name="Howe K.L."/>
            <person name="Andrews T.D."/>
            <person name="Searle S."/>
            <person name="Hunt S.E."/>
            <person name="Scott C.E."/>
            <person name="Jones M.C."/>
            <person name="Ainscough R."/>
            <person name="Almeida J.P."/>
            <person name="Ambrose K.D."/>
            <person name="Ashwell R.I.S."/>
            <person name="Babbage A.K."/>
            <person name="Babbage S."/>
            <person name="Bagguley C.L."/>
            <person name="Bailey J."/>
            <person name="Banerjee R."/>
            <person name="Barker D.J."/>
            <person name="Barlow K.F."/>
            <person name="Bates K."/>
            <person name="Beasley H."/>
            <person name="Beasley O."/>
            <person name="Bird C.P."/>
            <person name="Bray-Allen S."/>
            <person name="Brown A.J."/>
            <person name="Brown J.Y."/>
            <person name="Burford D."/>
            <person name="Burrill W."/>
            <person name="Burton J."/>
            <person name="Carder C."/>
            <person name="Carter N.P."/>
            <person name="Chapman J.C."/>
            <person name="Chen Y."/>
            <person name="Clarke G."/>
            <person name="Clark S.Y."/>
            <person name="Clee C.M."/>
            <person name="Clegg S."/>
            <person name="Collier R.E."/>
            <person name="Corby N."/>
            <person name="Crosier M."/>
            <person name="Cummings A.T."/>
            <person name="Davies J."/>
            <person name="Dhami P."/>
            <person name="Dunn M."/>
            <person name="Dutta I."/>
            <person name="Dyer L.W."/>
            <person name="Earthrowl M.E."/>
            <person name="Faulkner L."/>
            <person name="Fleming C.J."/>
            <person name="Frankish A."/>
            <person name="Frankland J.A."/>
            <person name="French L."/>
            <person name="Fricker D.G."/>
            <person name="Garner P."/>
            <person name="Garnett J."/>
            <person name="Ghori J."/>
            <person name="Gilbert J.G.R."/>
            <person name="Glison C."/>
            <person name="Grafham D.V."/>
            <person name="Gribble S."/>
            <person name="Griffiths C."/>
            <person name="Griffiths-Jones S."/>
            <person name="Grocock R."/>
            <person name="Guy J."/>
            <person name="Hall R.E."/>
            <person name="Hammond S."/>
            <person name="Harley J.L."/>
            <person name="Harrison E.S.I."/>
            <person name="Hart E.A."/>
            <person name="Heath P.D."/>
            <person name="Henderson C.D."/>
            <person name="Hopkins B.L."/>
            <person name="Howard P.J."/>
            <person name="Howden P.J."/>
            <person name="Huckle E."/>
            <person name="Johnson C."/>
            <person name="Johnson D."/>
            <person name="Joy A.A."/>
            <person name="Kay M."/>
            <person name="Keenan S."/>
            <person name="Kershaw J.K."/>
            <person name="Kimberley A.M."/>
            <person name="King A."/>
            <person name="Knights A."/>
            <person name="Laird G.K."/>
            <person name="Langford C."/>
            <person name="Lawlor S."/>
            <person name="Leongamornlert D.A."/>
            <person name="Leversha M."/>
            <person name="Lloyd C."/>
            <person name="Lloyd D.M."/>
            <person name="Lovell J."/>
            <person name="Martin S."/>
            <person name="Mashreghi-Mohammadi M."/>
            <person name="Matthews L."/>
            <person name="McLaren S."/>
            <person name="McLay K.E."/>
            <person name="McMurray A."/>
            <person name="Milne S."/>
            <person name="Nickerson T."/>
            <person name="Nisbett J."/>
            <person name="Nordsiek G."/>
            <person name="Pearce A.V."/>
            <person name="Peck A.I."/>
            <person name="Porter K.M."/>
            <person name="Pandian R."/>
            <person name="Pelan S."/>
            <person name="Phillimore B."/>
            <person name="Povey S."/>
            <person name="Ramsey Y."/>
            <person name="Rand V."/>
            <person name="Scharfe M."/>
            <person name="Sehra H.K."/>
            <person name="Shownkeen R."/>
            <person name="Sims S.K."/>
            <person name="Skuce C.D."/>
            <person name="Smith M."/>
            <person name="Steward C.A."/>
            <person name="Swarbreck D."/>
            <person name="Sycamore N."/>
            <person name="Tester J."/>
            <person name="Thorpe A."/>
            <person name="Tracey A."/>
            <person name="Tromans A."/>
            <person name="Thomas D.W."/>
            <person name="Wall M."/>
            <person name="Wallis J.M."/>
            <person name="West A.P."/>
            <person name="Whitehead S.L."/>
            <person name="Willey D.L."/>
            <person name="Williams S.A."/>
            <person name="Wilming L."/>
            <person name="Wray P.W."/>
            <person name="Young L."/>
            <person name="Ashurst J.L."/>
            <person name="Coulson A."/>
            <person name="Blocker H."/>
            <person name="Durbin R.M."/>
            <person name="Sulston J.E."/>
            <person name="Hubbard T."/>
            <person name="Jackson M.J."/>
            <person name="Bentley D.R."/>
            <person name="Beck S."/>
            <person name="Rogers J."/>
            <person name="Dunham I."/>
        </authorList>
    </citation>
    <scope>NUCLEOTIDE SEQUENCE [LARGE SCALE GENOMIC DNA]</scope>
</reference>
<reference key="5">
    <citation type="submission" date="2005-07" db="EMBL/GenBank/DDBJ databases">
        <authorList>
            <person name="Mural R.J."/>
            <person name="Istrail S."/>
            <person name="Sutton G.G."/>
            <person name="Florea L."/>
            <person name="Halpern A.L."/>
            <person name="Mobarry C.M."/>
            <person name="Lippert R."/>
            <person name="Walenz B."/>
            <person name="Shatkay H."/>
            <person name="Dew I."/>
            <person name="Miller J.R."/>
            <person name="Flanigan M.J."/>
            <person name="Edwards N.J."/>
            <person name="Bolanos R."/>
            <person name="Fasulo D."/>
            <person name="Halldorsson B.V."/>
            <person name="Hannenhalli S."/>
            <person name="Turner R."/>
            <person name="Yooseph S."/>
            <person name="Lu F."/>
            <person name="Nusskern D.R."/>
            <person name="Shue B.C."/>
            <person name="Zheng X.H."/>
            <person name="Zhong F."/>
            <person name="Delcher A.L."/>
            <person name="Huson D.H."/>
            <person name="Kravitz S.A."/>
            <person name="Mouchard L."/>
            <person name="Reinert K."/>
            <person name="Remington K.A."/>
            <person name="Clark A.G."/>
            <person name="Waterman M.S."/>
            <person name="Eichler E.E."/>
            <person name="Adams M.D."/>
            <person name="Hunkapiller M.W."/>
            <person name="Myers E.W."/>
            <person name="Venter J.C."/>
        </authorList>
    </citation>
    <scope>NUCLEOTIDE SEQUENCE [LARGE SCALE GENOMIC DNA]</scope>
</reference>
<reference key="6">
    <citation type="journal article" date="2004" name="Genome Res.">
        <title>The status, quality, and expansion of the NIH full-length cDNA project: the Mammalian Gene Collection (MGC).</title>
        <authorList>
            <consortium name="The MGC Project Team"/>
        </authorList>
    </citation>
    <scope>NUCLEOTIDE SEQUENCE [LARGE SCALE MRNA] (ISOFORM 1)</scope>
    <source>
        <tissue>Skin</tissue>
    </source>
</reference>
<reference key="7">
    <citation type="journal article" date="2003" name="J. Biol. Chem.">
        <title>Ca2+-dependent phosphorylation of syntaxin-1A by the death-associated protein (DAP) kinase regulates its interaction with Munc18.</title>
        <authorList>
            <person name="Tian J.H."/>
            <person name="Das S."/>
            <person name="Sheng Z.H."/>
        </authorList>
    </citation>
    <scope>INTERACTION WITH STX1A</scope>
</reference>
<reference key="8">
    <citation type="journal article" date="2016" name="J. Cell Biol.">
        <title>Munc18-1 is a molecular chaperone for alpha-synuclein, controlling its self-replicating aggregation.</title>
        <authorList>
            <person name="Chai Y.J."/>
            <person name="Sierecki E."/>
            <person name="Tomatis V.M."/>
            <person name="Gormal R.S."/>
            <person name="Giles N."/>
            <person name="Morrow I.C."/>
            <person name="Xia D."/>
            <person name="Goetz J."/>
            <person name="Parton R.G."/>
            <person name="Collins B.M."/>
            <person name="Gambin Y."/>
            <person name="Meunier F.A."/>
        </authorList>
    </citation>
    <scope>INTERACTION WITH ALPHA-SYNUCLEIN/SNCA</scope>
</reference>
<reference key="9">
    <citation type="journal article" date="2008" name="Nat. Genet.">
        <title>De novo mutations in the gene encoding STXBP1 (MUNC18-1) cause early infantile epileptic encephalopathy.</title>
        <authorList>
            <person name="Saitsu H."/>
            <person name="Kato M."/>
            <person name="Mizuguchi T."/>
            <person name="Hamada K."/>
            <person name="Osaka H."/>
            <person name="Tohyama J."/>
            <person name="Uruno K."/>
            <person name="Kumada S."/>
            <person name="Nishiyama K."/>
            <person name="Nishimura A."/>
            <person name="Okada I."/>
            <person name="Yoshimura Y."/>
            <person name="Hirai S."/>
            <person name="Kumada T."/>
            <person name="Hayasaka K."/>
            <person name="Fukuda A."/>
            <person name="Ogata K."/>
            <person name="Matsumoto N."/>
        </authorList>
    </citation>
    <scope>INVOLVEMENT IN DEE4</scope>
    <scope>VARIANTS DEE4 ASP-84; TYR-180; ARG-443 AND ASP-544</scope>
    <scope>CHARACTERIZATION OF VARIANTS DEE4 ASP-84; TYR-180; ARG-443 AND ASP-544</scope>
</reference>
<reference key="10">
    <citation type="journal article" date="2008" name="Proc. Natl. Acad. Sci. U.S.A.">
        <title>A quantitative atlas of mitotic phosphorylation.</title>
        <authorList>
            <person name="Dephoure N."/>
            <person name="Zhou C."/>
            <person name="Villen J."/>
            <person name="Beausoleil S.A."/>
            <person name="Bakalarski C.E."/>
            <person name="Elledge S.J."/>
            <person name="Gygi S.P."/>
        </authorList>
    </citation>
    <scope>IDENTIFICATION BY MASS SPECTROMETRY [LARGE SCALE ANALYSIS]</scope>
    <source>
        <tissue>Cervix carcinoma</tissue>
    </source>
</reference>
<reference key="11">
    <citation type="journal article" date="2011" name="BMC Syst. Biol.">
        <title>Initial characterization of the human central proteome.</title>
        <authorList>
            <person name="Burkard T.R."/>
            <person name="Planyavsky M."/>
            <person name="Kaupe I."/>
            <person name="Breitwieser F.P."/>
            <person name="Buerckstuemmer T."/>
            <person name="Bennett K.L."/>
            <person name="Superti-Furga G."/>
            <person name="Colinge J."/>
        </authorList>
    </citation>
    <scope>IDENTIFICATION BY MASS SPECTROMETRY [LARGE SCALE ANALYSIS]</scope>
</reference>
<reference key="12">
    <citation type="journal article" date="2013" name="J. Proteome Res.">
        <title>Toward a comprehensive characterization of a human cancer cell phosphoproteome.</title>
        <authorList>
            <person name="Zhou H."/>
            <person name="Di Palma S."/>
            <person name="Preisinger C."/>
            <person name="Peng M."/>
            <person name="Polat A.N."/>
            <person name="Heck A.J."/>
            <person name="Mohammed S."/>
        </authorList>
    </citation>
    <scope>IDENTIFICATION BY MASS SPECTROMETRY [LARGE SCALE ANALYSIS]</scope>
    <source>
        <tissue>Cervix carcinoma</tissue>
    </source>
</reference>
<reference key="13">
    <citation type="journal article" date="2010" name="Epilepsia">
        <title>STXBP1 mutations in early infantile epileptic encephalopathy with suppression-burst pattern.</title>
        <authorList>
            <person name="Saitsu H."/>
            <person name="Kato M."/>
            <person name="Okada I."/>
            <person name="Orii K.E."/>
            <person name="Higuchi T."/>
            <person name="Hoshino H."/>
            <person name="Kubota M."/>
            <person name="Arai H."/>
            <person name="Tagawa T."/>
            <person name="Kimura S."/>
            <person name="Sudo A."/>
            <person name="Miyama S."/>
            <person name="Takami Y."/>
            <person name="Watanabe T."/>
            <person name="Nishimura A."/>
            <person name="Nishiyama K."/>
            <person name="Miyake N."/>
            <person name="Wada T."/>
            <person name="Osaka H."/>
            <person name="Kondo N."/>
            <person name="Hayasaka K."/>
            <person name="Matsumoto N."/>
        </authorList>
    </citation>
    <scope>VARIANT DEE4 HIS-406</scope>
    <scope>SUBCELLULAR LOCATION</scope>
    <scope>CHARACTERIZATION OF VARIANTS ILE-84 AND LEU-431</scope>
</reference>
<reference key="14">
    <citation type="journal article" date="2011" name="Epilepsia">
        <title>Epileptic and nonepileptic features in patients with early onset epileptic encephalopathy and STXBP1 mutations.</title>
        <authorList>
            <person name="Milh M."/>
            <person name="Villeneuve N."/>
            <person name="Chouchane M."/>
            <person name="Kaminska A."/>
            <person name="Laroche C."/>
            <person name="Barthez M.A."/>
            <person name="Gitiaux C."/>
            <person name="Bartoli C."/>
            <person name="Borges-Correia A."/>
            <person name="Cacciagli P."/>
            <person name="Mignon-Ravix C."/>
            <person name="Cuberos H."/>
            <person name="Chabrol B."/>
            <person name="Villard L."/>
        </authorList>
    </citation>
    <scope>VARIANTS DEE4 ARG-183; LEU-480 AND PRO-574</scope>
</reference>
<reference key="15">
    <citation type="journal article" date="2013" name="Epilepsia">
        <title>Targeted capture and sequencing for detection of mutations causing early onset epileptic encephalopathy.</title>
        <authorList>
            <person name="Kodera H."/>
            <person name="Kato M."/>
            <person name="Nord A.S."/>
            <person name="Walsh T."/>
            <person name="Lee M."/>
            <person name="Yamanaka G."/>
            <person name="Tohyama J."/>
            <person name="Nakamura K."/>
            <person name="Nakagawa E."/>
            <person name="Ikeda T."/>
            <person name="Ben-Zeev B."/>
            <person name="Lev D."/>
            <person name="Lerman-Sagie T."/>
            <person name="Straussberg R."/>
            <person name="Tanabe S."/>
            <person name="Ueda K."/>
            <person name="Amamoto M."/>
            <person name="Ohta S."/>
            <person name="Nonoda Y."/>
            <person name="Nishiyama K."/>
            <person name="Tsurusaki Y."/>
            <person name="Nakashima M."/>
            <person name="Miyake N."/>
            <person name="Hayasaka K."/>
            <person name="King M.C."/>
            <person name="Matsumoto N."/>
            <person name="Saitsu H."/>
        </authorList>
    </citation>
    <scope>INVOLVEMENT IN DEE4</scope>
</reference>
<reference key="16">
    <citation type="journal article" date="2013" name="Nat. Genet.">
        <title>Targeted resequencing in epileptic encephalopathies identifies de novo mutations in CHD2 and SYNGAP1.</title>
        <authorList>
            <person name="Carvill G.L."/>
            <person name="Heavin S.B."/>
            <person name="Yendle S.C."/>
            <person name="McMahon J.M."/>
            <person name="O'Roak B.J."/>
            <person name="Cook J."/>
            <person name="Khan A."/>
            <person name="Dorschner M.O."/>
            <person name="Weaver M."/>
            <person name="Calvert S."/>
            <person name="Malone S."/>
            <person name="Wallace G."/>
            <person name="Stanley T."/>
            <person name="Bye A.M."/>
            <person name="Bleasel A."/>
            <person name="Howell K.B."/>
            <person name="Kivity S."/>
            <person name="Mackay M.T."/>
            <person name="Rodriguez-Casero V."/>
            <person name="Webster R."/>
            <person name="Korczyn A."/>
            <person name="Afawi Z."/>
            <person name="Zelnick N."/>
            <person name="Lerman-Sagie T."/>
            <person name="Lev D."/>
            <person name="Moeller R.S."/>
            <person name="Gill D."/>
            <person name="Andrade D.M."/>
            <person name="Freeman J.L."/>
            <person name="Sadleir L.G."/>
            <person name="Shendure J."/>
            <person name="Berkovic S.F."/>
            <person name="Scheffer I.E."/>
            <person name="Mefford H.C."/>
        </authorList>
    </citation>
    <scope>VARIANTS DEE4 PHE-42; TRP-190 AND ARG-354</scope>
    <scope>VARIANTS PRO-80; CYS-544 AND ALA-570</scope>
</reference>
<reference key="17">
    <citation type="journal article" date="2014" name="J. Child Neurol.">
        <title>A novel mutation in STXBP1 gene in a child with epileptic encephalopathy and an atypical electroclinical pattern.</title>
        <authorList>
            <person name="Romaniello R."/>
            <person name="Zucca C."/>
            <person name="Tenderini E."/>
            <person name="Arrigoni F."/>
            <person name="Ragona F."/>
            <person name="Zorzi G."/>
            <person name="Bassi M.T."/>
            <person name="Borgatti R."/>
        </authorList>
    </citation>
    <scope>VARIANT DEE4 THR-251</scope>
</reference>
<reference key="18">
    <citation type="journal article" date="2014" name="Neurology">
        <title>GABRA1 and STXBP1: novel genetic causes of Dravet syndrome.</title>
        <authorList>
            <person name="Carvill G.L."/>
            <person name="Weckhuysen S."/>
            <person name="McMahon J.M."/>
            <person name="Hartmann C."/>
            <person name="Moller R.S."/>
            <person name="Hjalgrim H."/>
            <person name="Cook J."/>
            <person name="Geraghty E."/>
            <person name="O'Roak B.J."/>
            <person name="Petrou S."/>
            <person name="Clarke A."/>
            <person name="Gill D."/>
            <person name="Sadleir L.G."/>
            <person name="Muhle H."/>
            <person name="von Spiczak S."/>
            <person name="Nikanorova M."/>
            <person name="Hodgson B.L."/>
            <person name="Gazina E.V."/>
            <person name="Suls A."/>
            <person name="Shendure J."/>
            <person name="Dibbens L.M."/>
            <person name="De Jonghe P."/>
            <person name="Helbig I."/>
            <person name="Berkovic S.F."/>
            <person name="Scheffer I.E."/>
            <person name="Mefford H.C."/>
        </authorList>
    </citation>
    <scope>VARIANTS DEE4 LYS-283; TYR-285 AND PRO-445</scope>
</reference>
<reference key="19">
    <citation type="journal article" date="2015" name="Epilepsia">
        <title>Diagnostic yield of genetic testing in epileptic encephalopathy in childhood.</title>
        <authorList>
            <person name="Mercimek-Mahmutoglu S."/>
            <person name="Patel J."/>
            <person name="Cordeiro D."/>
            <person name="Hewson S."/>
            <person name="Callen D."/>
            <person name="Donner E.J."/>
            <person name="Hahn C.D."/>
            <person name="Kannu P."/>
            <person name="Kobayashi J."/>
            <person name="Minassian B.A."/>
            <person name="Moharir M."/>
            <person name="Siriwardena K."/>
            <person name="Weiss S.K."/>
            <person name="Weksberg R."/>
            <person name="Snead O.C. III"/>
        </authorList>
    </citation>
    <scope>VARIANT DEE4 122-ARG--SER-594 DEL</scope>
</reference>
<reference key="20">
    <citation type="journal article" date="2015" name="NeuroReport">
        <title>A de-novo STXBP1 gene mutation in a patient showing the Rett syndrome phenotype.</title>
        <authorList>
            <person name="Romaniello R."/>
            <person name="Saettini F."/>
            <person name="Panzeri E."/>
            <person name="Arrigoni F."/>
            <person name="Bassi M.T."/>
            <person name="Borgatti R."/>
        </authorList>
    </citation>
    <scope>VARIANT DEE4 HIS-406</scope>
</reference>
<reference key="21">
    <citation type="journal article" date="2016" name="J. Med. Genet.">
        <title>Improving diagnosis and broadening the phenotypes in early-onset seizure and severe developmental delay disorders through gene panel analysis.</title>
        <authorList>
            <person name="Trump N."/>
            <person name="McTague A."/>
            <person name="Brittain H."/>
            <person name="Papandreou A."/>
            <person name="Meyer E."/>
            <person name="Ngoh A."/>
            <person name="Palmer R."/>
            <person name="Morrogh D."/>
            <person name="Boustred C."/>
            <person name="Hurst J.A."/>
            <person name="Jenkins L."/>
            <person name="Kurian M.A."/>
            <person name="Scott R.H."/>
        </authorList>
    </citation>
    <scope>VARIANTS DEE4 PRO-281 AND HIS-292</scope>
</reference>
<reference key="22">
    <citation type="journal article" date="2017" name="Hum. Mutat.">
        <title>Diagnostic targeted resequencing in 349 patients with drug-resistant pediatric epilepsies identifies causative mutations in 30 different genes.</title>
        <authorList>
            <consortium name="Clinical Study Group"/>
            <person name="Parrini E."/>
            <person name="Marini C."/>
            <person name="Mei D."/>
            <person name="Galuppi A."/>
            <person name="Cellini E."/>
            <person name="Pucatti D."/>
            <person name="Chiti L."/>
            <person name="Rutigliano D."/>
            <person name="Bianchini C."/>
            <person name="Virdo S."/>
            <person name="De Vita D."/>
            <person name="Bigoni S."/>
            <person name="Barba C."/>
            <person name="Mari F."/>
            <person name="Montomoli M."/>
            <person name="Pisano T."/>
            <person name="Rosati A."/>
            <person name="Guerrini R."/>
        </authorList>
    </citation>
    <scope>VARIANT DEE4 CYS-406</scope>
</reference>
<sequence length="594" mass="67569">MAPIGLKAVVGEKIMHDVIKKVKKKGEWKVLVVDQLSMRMLSSCCKMTDIMTEGITIVEDINKRREPLPSLEAVYLITPSEKSVHSLISDFKDPPTAKYRAAHVFFTDSCPDALFNELVKSRAAKVIKTLTEINIAFLPYESQVYSLDSADSFQSFYSPHKAQMKNPILERLAEQIATLCATLKEYPAVRYRGEYKDNALLAQLIQDKLDAYKADDPTMGEGPDKARSQLLILDRGFDPSSPVLHELTFQAMSYDLLPIENDVYKYETSGIGEARVKEVLLDEDDDLWIALRHKHIAEVSQEVTRSLKDFSSSKRMNTGEKTTMRDLSQMLKKMPQYQKELSKYSTHLHLAEDCMKHYQGTVDKLCRVEQDLAMGTDAEGEKIKDPMRAIVPILLDANVSTYDKIRIILLYIFLKNGITEENLNKLIQHAQIPPEDSEIITNMAHLGVPIVTDSTLRRRSKPERKERISEQTYQLSRWTPIIKDIMEDTIEDKLDTKHYPYISTRSSASFSTTAVSARYGHWHKNKAPGEYRSGPRLIIFILGGVSLNEMRCAYEVTQANGKWEVLIGSTHILTPQKLLDTLKKLNKTDEEISS</sequence>